<name>RIMM_SYNFM</name>
<accession>A0LMM1</accession>
<protein>
    <recommendedName>
        <fullName evidence="1">Ribosome maturation factor RimM</fullName>
    </recommendedName>
</protein>
<proteinExistence type="inferred from homology"/>
<dbReference type="EMBL" id="CP000478">
    <property type="protein sequence ID" value="ABK18673.1"/>
    <property type="molecule type" value="Genomic_DNA"/>
</dbReference>
<dbReference type="EMBL" id="CP000478">
    <property type="protein sequence ID" value="ABK18715.1"/>
    <property type="molecule type" value="Genomic_DNA"/>
</dbReference>
<dbReference type="RefSeq" id="WP_011699837.1">
    <property type="nucleotide sequence ID" value="NC_008554.1"/>
</dbReference>
<dbReference type="SMR" id="A0LMM1"/>
<dbReference type="FunCoup" id="A0LMM1">
    <property type="interactions" value="423"/>
</dbReference>
<dbReference type="STRING" id="335543.Sfum_2999"/>
<dbReference type="KEGG" id="sfu:Sfum_2999"/>
<dbReference type="KEGG" id="sfu:Sfum_3041"/>
<dbReference type="eggNOG" id="COG0806">
    <property type="taxonomic scope" value="Bacteria"/>
</dbReference>
<dbReference type="HOGENOM" id="CLU_077636_1_0_7"/>
<dbReference type="InParanoid" id="A0LMM1"/>
<dbReference type="OrthoDB" id="9783509at2"/>
<dbReference type="Proteomes" id="UP000001784">
    <property type="component" value="Chromosome"/>
</dbReference>
<dbReference type="GO" id="GO:0005737">
    <property type="term" value="C:cytoplasm"/>
    <property type="evidence" value="ECO:0007669"/>
    <property type="project" value="UniProtKB-SubCell"/>
</dbReference>
<dbReference type="GO" id="GO:0005840">
    <property type="term" value="C:ribosome"/>
    <property type="evidence" value="ECO:0007669"/>
    <property type="project" value="InterPro"/>
</dbReference>
<dbReference type="GO" id="GO:0043022">
    <property type="term" value="F:ribosome binding"/>
    <property type="evidence" value="ECO:0007669"/>
    <property type="project" value="InterPro"/>
</dbReference>
<dbReference type="GO" id="GO:0042274">
    <property type="term" value="P:ribosomal small subunit biogenesis"/>
    <property type="evidence" value="ECO:0007669"/>
    <property type="project" value="UniProtKB-UniRule"/>
</dbReference>
<dbReference type="GO" id="GO:0006364">
    <property type="term" value="P:rRNA processing"/>
    <property type="evidence" value="ECO:0007669"/>
    <property type="project" value="UniProtKB-UniRule"/>
</dbReference>
<dbReference type="Gene3D" id="2.30.30.240">
    <property type="entry name" value="PRC-barrel domain"/>
    <property type="match status" value="1"/>
</dbReference>
<dbReference type="Gene3D" id="2.40.30.60">
    <property type="entry name" value="RimM"/>
    <property type="match status" value="1"/>
</dbReference>
<dbReference type="HAMAP" id="MF_00014">
    <property type="entry name" value="Ribosome_mat_RimM"/>
    <property type="match status" value="1"/>
</dbReference>
<dbReference type="InterPro" id="IPR011033">
    <property type="entry name" value="PRC_barrel-like_sf"/>
</dbReference>
<dbReference type="InterPro" id="IPR056792">
    <property type="entry name" value="PRC_RimM"/>
</dbReference>
<dbReference type="InterPro" id="IPR011961">
    <property type="entry name" value="RimM"/>
</dbReference>
<dbReference type="InterPro" id="IPR002676">
    <property type="entry name" value="RimM_N"/>
</dbReference>
<dbReference type="InterPro" id="IPR036976">
    <property type="entry name" value="RimM_N_sf"/>
</dbReference>
<dbReference type="InterPro" id="IPR009000">
    <property type="entry name" value="Transl_B-barrel_sf"/>
</dbReference>
<dbReference type="NCBIfam" id="TIGR02273">
    <property type="entry name" value="16S_RimM"/>
    <property type="match status" value="1"/>
</dbReference>
<dbReference type="PANTHER" id="PTHR33692">
    <property type="entry name" value="RIBOSOME MATURATION FACTOR RIMM"/>
    <property type="match status" value="1"/>
</dbReference>
<dbReference type="PANTHER" id="PTHR33692:SF1">
    <property type="entry name" value="RIBOSOME MATURATION FACTOR RIMM"/>
    <property type="match status" value="1"/>
</dbReference>
<dbReference type="Pfam" id="PF24986">
    <property type="entry name" value="PRC_RimM"/>
    <property type="match status" value="1"/>
</dbReference>
<dbReference type="Pfam" id="PF01782">
    <property type="entry name" value="RimM"/>
    <property type="match status" value="1"/>
</dbReference>
<dbReference type="SUPFAM" id="SSF50346">
    <property type="entry name" value="PRC-barrel domain"/>
    <property type="match status" value="1"/>
</dbReference>
<dbReference type="SUPFAM" id="SSF50447">
    <property type="entry name" value="Translation proteins"/>
    <property type="match status" value="1"/>
</dbReference>
<sequence length="176" mass="19417">MSKTVEPACLVPVGKVTRTHGIRGALKIFPYGESLAAQAAGERFFLRSKNGGYCTLTLIGLRAQGRMLVCGFEEIKDVNGAQPFVGEEIFLPEDRLPPVSEGEYYHYRLIGLDIVTLDGESLGVLRKIIETGGNDVYVAEREGREILIPAIEDVIREIDLERKRMVVDLPEGLVDA</sequence>
<feature type="chain" id="PRO_0000351803" description="Ribosome maturation factor RimM">
    <location>
        <begin position="1"/>
        <end position="176"/>
    </location>
</feature>
<feature type="domain" description="PRC barrel" evidence="1">
    <location>
        <begin position="101"/>
        <end position="173"/>
    </location>
</feature>
<evidence type="ECO:0000255" key="1">
    <source>
        <dbReference type="HAMAP-Rule" id="MF_00014"/>
    </source>
</evidence>
<reference key="1">
    <citation type="submission" date="2006-10" db="EMBL/GenBank/DDBJ databases">
        <title>Complete sequence of Syntrophobacter fumaroxidans MPOB.</title>
        <authorList>
            <consortium name="US DOE Joint Genome Institute"/>
            <person name="Copeland A."/>
            <person name="Lucas S."/>
            <person name="Lapidus A."/>
            <person name="Barry K."/>
            <person name="Detter J.C."/>
            <person name="Glavina del Rio T."/>
            <person name="Hammon N."/>
            <person name="Israni S."/>
            <person name="Pitluck S."/>
            <person name="Goltsman E.G."/>
            <person name="Martinez M."/>
            <person name="Schmutz J."/>
            <person name="Larimer F."/>
            <person name="Land M."/>
            <person name="Hauser L."/>
            <person name="Kyrpides N."/>
            <person name="Kim E."/>
            <person name="Boone D.R."/>
            <person name="Brockman F."/>
            <person name="Culley D."/>
            <person name="Ferry J."/>
            <person name="Gunsalus R."/>
            <person name="McInerney M.J."/>
            <person name="Morrison M."/>
            <person name="Plugge C."/>
            <person name="Rohlin L."/>
            <person name="Scholten J."/>
            <person name="Sieber J."/>
            <person name="Stams A.J.M."/>
            <person name="Worm P."/>
            <person name="Henstra A.M."/>
            <person name="Richardson P."/>
        </authorList>
    </citation>
    <scope>NUCLEOTIDE SEQUENCE [LARGE SCALE GENOMIC DNA]</scope>
    <source>
        <strain>DSM 10017 / MPOB</strain>
    </source>
</reference>
<keyword id="KW-0143">Chaperone</keyword>
<keyword id="KW-0963">Cytoplasm</keyword>
<keyword id="KW-1185">Reference proteome</keyword>
<keyword id="KW-0690">Ribosome biogenesis</keyword>
<keyword id="KW-0698">rRNA processing</keyword>
<comment type="function">
    <text evidence="1">An accessory protein needed during the final step in the assembly of 30S ribosomal subunit, possibly for assembly of the head region. Essential for efficient processing of 16S rRNA. May be needed both before and after RbfA during the maturation of 16S rRNA. It has affinity for free ribosomal 30S subunits but not for 70S ribosomes.</text>
</comment>
<comment type="subunit">
    <text evidence="1">Binds ribosomal protein uS19.</text>
</comment>
<comment type="subcellular location">
    <subcellularLocation>
        <location evidence="1">Cytoplasm</location>
    </subcellularLocation>
</comment>
<comment type="domain">
    <text evidence="1">The PRC barrel domain binds ribosomal protein uS19.</text>
</comment>
<comment type="similarity">
    <text evidence="1">Belongs to the RimM family.</text>
</comment>
<gene>
    <name evidence="1" type="primary">rimM1</name>
    <name type="ordered locus">Sfum_2999</name>
</gene>
<gene>
    <name evidence="1" type="primary">rimM2</name>
    <name type="ordered locus">Sfum_3041</name>
</gene>
<organism>
    <name type="scientific">Syntrophobacter fumaroxidans (strain DSM 10017 / MPOB)</name>
    <dbReference type="NCBI Taxonomy" id="335543"/>
    <lineage>
        <taxon>Bacteria</taxon>
        <taxon>Pseudomonadati</taxon>
        <taxon>Thermodesulfobacteriota</taxon>
        <taxon>Syntrophobacteria</taxon>
        <taxon>Syntrophobacterales</taxon>
        <taxon>Syntrophobacteraceae</taxon>
        <taxon>Syntrophobacter</taxon>
    </lineage>
</organism>